<reference key="1">
    <citation type="journal article" date="2001" name="J. Invest. Dermatol.">
        <title>Identification of cDNA encoding a serine protease homologous to human complement C1r precursor from grafted mouse skin.</title>
        <authorList>
            <person name="Byun S.J."/>
            <person name="Bahk Y.Y."/>
            <person name="Ryoo Z.Y."/>
            <person name="Kim K.E."/>
            <person name="Hwang H.Y."/>
            <person name="Lee J.W."/>
            <person name="Yi J.Y."/>
            <person name="Kim T.Y."/>
        </authorList>
    </citation>
    <scope>NUCLEOTIDE SEQUENCE [MRNA]</scope>
    <source>
        <strain>C57BL/6J</strain>
    </source>
</reference>
<reference key="2">
    <citation type="journal article" date="2003" name="Biochem. J.">
        <title>Complement C1r and C1s genes are duplicated in the mouse: differential expression generates alternative isomorphs in the liver and in the male reproductive system.</title>
        <authorList>
            <person name="Garnier G."/>
            <person name="Circolo A."/>
            <person name="Xu Y."/>
            <person name="Volanakis J.E."/>
        </authorList>
    </citation>
    <scope>NUCLEOTIDE SEQUENCE [GENOMIC DNA]</scope>
    <scope>TISSUE SPECIFICITY</scope>
    <source>
        <strain>129/SvJ</strain>
    </source>
</reference>
<reference key="3">
    <citation type="journal article" date="2004" name="Genome Res.">
        <title>The status, quality, and expansion of the NIH full-length cDNA project: the Mammalian Gene Collection (MGC).</title>
        <authorList>
            <consortium name="The MGC Project Team"/>
        </authorList>
    </citation>
    <scope>NUCLEOTIDE SEQUENCE [LARGE SCALE MRNA]</scope>
</reference>
<reference key="4">
    <citation type="journal article" date="2007" name="J. Proteome Res.">
        <title>Enhanced analysis of the mouse plasma proteome using cysteine-containing tryptic glycopeptides.</title>
        <authorList>
            <person name="Bernhard O.K."/>
            <person name="Kapp E.A."/>
            <person name="Simpson R.J."/>
        </authorList>
    </citation>
    <scope>GLYCOSYLATION [LARGE SCALE ANALYSIS] AT ASN-220</scope>
    <source>
        <strain>C57BL/6J</strain>
        <tissue>Plasma</tissue>
    </source>
</reference>
<dbReference type="EC" id="3.4.21.41" evidence="1"/>
<dbReference type="EMBL" id="AF148216">
    <property type="protein sequence ID" value="AAG01898.1"/>
    <property type="molecule type" value="mRNA"/>
</dbReference>
<dbReference type="EMBL" id="AF459011">
    <property type="protein sequence ID" value="AAO15553.1"/>
    <property type="molecule type" value="Genomic_DNA"/>
</dbReference>
<dbReference type="EMBL" id="AF459008">
    <property type="protein sequence ID" value="AAO15553.1"/>
    <property type="status" value="JOINED"/>
    <property type="molecule type" value="Genomic_DNA"/>
</dbReference>
<dbReference type="EMBL" id="AF459009">
    <property type="protein sequence ID" value="AAO15553.1"/>
    <property type="status" value="JOINED"/>
    <property type="molecule type" value="Genomic_DNA"/>
</dbReference>
<dbReference type="EMBL" id="AF459010">
    <property type="protein sequence ID" value="AAO15553.1"/>
    <property type="status" value="JOINED"/>
    <property type="molecule type" value="Genomic_DNA"/>
</dbReference>
<dbReference type="EMBL" id="BC004637">
    <property type="protein sequence ID" value="AAH04637.1"/>
    <property type="molecule type" value="mRNA"/>
</dbReference>
<dbReference type="CCDS" id="CCDS20521.1"/>
<dbReference type="RefSeq" id="NP_075632.3">
    <property type="nucleotide sequence ID" value="NM_023143.3"/>
</dbReference>
<dbReference type="SMR" id="Q8CG16"/>
<dbReference type="ComplexPortal" id="CPX-4984">
    <property type="entry name" value="Complement C1 complex, C1ra-C1sa variant"/>
</dbReference>
<dbReference type="FunCoup" id="Q8CG16">
    <property type="interactions" value="384"/>
</dbReference>
<dbReference type="STRING" id="10090.ENSMUSP00000063707"/>
<dbReference type="MEROPS" id="S01.209"/>
<dbReference type="GlyCosmos" id="Q8CG16">
    <property type="glycosylation" value="3 sites, No reported glycans"/>
</dbReference>
<dbReference type="GlyGen" id="Q8CG16">
    <property type="glycosylation" value="3 sites"/>
</dbReference>
<dbReference type="iPTMnet" id="Q8CG16"/>
<dbReference type="PhosphoSitePlus" id="Q8CG16"/>
<dbReference type="PaxDb" id="10090-ENSMUSP00000063707"/>
<dbReference type="PeptideAtlas" id="Q8CG16"/>
<dbReference type="ProteomicsDB" id="265402"/>
<dbReference type="Pumba" id="Q8CG16"/>
<dbReference type="DNASU" id="50909"/>
<dbReference type="Ensembl" id="ENSMUST00000068593.9">
    <property type="protein sequence ID" value="ENSMUSP00000063707.8"/>
    <property type="gene ID" value="ENSMUSG00000055172.11"/>
</dbReference>
<dbReference type="GeneID" id="50909"/>
<dbReference type="KEGG" id="mmu:50909"/>
<dbReference type="UCSC" id="uc009dra.2">
    <property type="organism name" value="mouse"/>
</dbReference>
<dbReference type="AGR" id="MGI:1355313"/>
<dbReference type="CTD" id="50909"/>
<dbReference type="MGI" id="MGI:1355313">
    <property type="gene designation" value="C1ra"/>
</dbReference>
<dbReference type="VEuPathDB" id="HostDB:ENSMUSG00000055172"/>
<dbReference type="eggNOG" id="KOG3627">
    <property type="taxonomic scope" value="Eukaryota"/>
</dbReference>
<dbReference type="GeneTree" id="ENSGT00940000158621"/>
<dbReference type="HOGENOM" id="CLU_006842_14_1_1"/>
<dbReference type="InParanoid" id="Q8CG16"/>
<dbReference type="OMA" id="SKGNRMH"/>
<dbReference type="OrthoDB" id="6261922at2759"/>
<dbReference type="PhylomeDB" id="Q8CG16"/>
<dbReference type="TreeFam" id="TF330373"/>
<dbReference type="Reactome" id="R-MMU-166663">
    <property type="pathway name" value="Initial triggering of complement"/>
</dbReference>
<dbReference type="Reactome" id="R-MMU-173623">
    <property type="pathway name" value="Classical antibody-mediated complement activation"/>
</dbReference>
<dbReference type="Reactome" id="R-MMU-977606">
    <property type="pathway name" value="Regulation of Complement cascade"/>
</dbReference>
<dbReference type="BioGRID-ORCS" id="50909">
    <property type="hits" value="2 hits in 77 CRISPR screens"/>
</dbReference>
<dbReference type="ChiTaRS" id="C1ra">
    <property type="organism name" value="mouse"/>
</dbReference>
<dbReference type="PRO" id="PR:Q8CG16"/>
<dbReference type="Proteomes" id="UP000000589">
    <property type="component" value="Chromosome 6"/>
</dbReference>
<dbReference type="RNAct" id="Q8CG16">
    <property type="molecule type" value="protein"/>
</dbReference>
<dbReference type="Bgee" id="ENSMUSG00000055172">
    <property type="expression patterns" value="Expressed in mesenteric lymph node and 97 other cell types or tissues"/>
</dbReference>
<dbReference type="GO" id="GO:0005576">
    <property type="term" value="C:extracellular region"/>
    <property type="evidence" value="ECO:0007669"/>
    <property type="project" value="InterPro"/>
</dbReference>
<dbReference type="GO" id="GO:0005509">
    <property type="term" value="F:calcium ion binding"/>
    <property type="evidence" value="ECO:0007669"/>
    <property type="project" value="InterPro"/>
</dbReference>
<dbReference type="GO" id="GO:0004252">
    <property type="term" value="F:serine-type endopeptidase activity"/>
    <property type="evidence" value="ECO:0007669"/>
    <property type="project" value="UniProtKB-EC"/>
</dbReference>
<dbReference type="GO" id="GO:0006958">
    <property type="term" value="P:complement activation, classical pathway"/>
    <property type="evidence" value="ECO:0007669"/>
    <property type="project" value="UniProtKB-KW"/>
</dbReference>
<dbReference type="GO" id="GO:0045087">
    <property type="term" value="P:innate immune response"/>
    <property type="evidence" value="ECO:0007669"/>
    <property type="project" value="UniProtKB-KW"/>
</dbReference>
<dbReference type="GO" id="GO:0006508">
    <property type="term" value="P:proteolysis"/>
    <property type="evidence" value="ECO:0007669"/>
    <property type="project" value="UniProtKB-KW"/>
</dbReference>
<dbReference type="CDD" id="cd00033">
    <property type="entry name" value="CCP"/>
    <property type="match status" value="2"/>
</dbReference>
<dbReference type="CDD" id="cd00041">
    <property type="entry name" value="CUB"/>
    <property type="match status" value="2"/>
</dbReference>
<dbReference type="CDD" id="cd00054">
    <property type="entry name" value="EGF_CA"/>
    <property type="match status" value="1"/>
</dbReference>
<dbReference type="CDD" id="cd00190">
    <property type="entry name" value="Tryp_SPc"/>
    <property type="match status" value="1"/>
</dbReference>
<dbReference type="FunFam" id="2.10.25.10:FF:000419">
    <property type="entry name" value="Complement C1r subcomponent"/>
    <property type="match status" value="1"/>
</dbReference>
<dbReference type="FunFam" id="2.10.70.10:FF:000040">
    <property type="entry name" value="Complement C1r subcomponent"/>
    <property type="match status" value="1"/>
</dbReference>
<dbReference type="FunFam" id="2.40.10.10:FF:000035">
    <property type="entry name" value="Complement C1r subcomponent"/>
    <property type="match status" value="1"/>
</dbReference>
<dbReference type="FunFam" id="2.60.120.290:FF:000028">
    <property type="entry name" value="Complement C1r subcomponent"/>
    <property type="match status" value="1"/>
</dbReference>
<dbReference type="FunFam" id="2.40.10.10:FF:000159">
    <property type="entry name" value="Complement C1r subcomponent like"/>
    <property type="match status" value="1"/>
</dbReference>
<dbReference type="FunFam" id="2.10.70.10:FF:000016">
    <property type="entry name" value="Mannan-binding lectin serine protease 1"/>
    <property type="match status" value="1"/>
</dbReference>
<dbReference type="FunFam" id="2.60.120.290:FF:000006">
    <property type="entry name" value="Mannan-binding lectin serine protease 1"/>
    <property type="match status" value="1"/>
</dbReference>
<dbReference type="Gene3D" id="2.10.70.10">
    <property type="entry name" value="Complement Module, domain 1"/>
    <property type="match status" value="2"/>
</dbReference>
<dbReference type="Gene3D" id="2.10.25.10">
    <property type="entry name" value="Laminin"/>
    <property type="match status" value="1"/>
</dbReference>
<dbReference type="Gene3D" id="2.60.120.290">
    <property type="entry name" value="Spermadhesin, CUB domain"/>
    <property type="match status" value="2"/>
</dbReference>
<dbReference type="Gene3D" id="2.40.10.10">
    <property type="entry name" value="Trypsin-like serine proteases"/>
    <property type="match status" value="1"/>
</dbReference>
<dbReference type="InterPro" id="IPR000859">
    <property type="entry name" value="CUB_dom"/>
</dbReference>
<dbReference type="InterPro" id="IPR001881">
    <property type="entry name" value="EGF-like_Ca-bd_dom"/>
</dbReference>
<dbReference type="InterPro" id="IPR000742">
    <property type="entry name" value="EGF-like_dom"/>
</dbReference>
<dbReference type="InterPro" id="IPR018097">
    <property type="entry name" value="EGF_Ca-bd_CS"/>
</dbReference>
<dbReference type="InterPro" id="IPR024175">
    <property type="entry name" value="Pept_S1A_C1r/C1S/mannan-bd"/>
</dbReference>
<dbReference type="InterPro" id="IPR009003">
    <property type="entry name" value="Peptidase_S1_PA"/>
</dbReference>
<dbReference type="InterPro" id="IPR043504">
    <property type="entry name" value="Peptidase_S1_PA_chymotrypsin"/>
</dbReference>
<dbReference type="InterPro" id="IPR001314">
    <property type="entry name" value="Peptidase_S1A"/>
</dbReference>
<dbReference type="InterPro" id="IPR035914">
    <property type="entry name" value="Sperma_CUB_dom_sf"/>
</dbReference>
<dbReference type="InterPro" id="IPR035976">
    <property type="entry name" value="Sushi/SCR/CCP_sf"/>
</dbReference>
<dbReference type="InterPro" id="IPR000436">
    <property type="entry name" value="Sushi_SCR_CCP_dom"/>
</dbReference>
<dbReference type="InterPro" id="IPR001254">
    <property type="entry name" value="Trypsin_dom"/>
</dbReference>
<dbReference type="InterPro" id="IPR033116">
    <property type="entry name" value="TRYPSIN_SER"/>
</dbReference>
<dbReference type="PANTHER" id="PTHR24255:SF25">
    <property type="entry name" value="COMPLEMENT C1R SUBCOMPONENT"/>
    <property type="match status" value="1"/>
</dbReference>
<dbReference type="PANTHER" id="PTHR24255">
    <property type="entry name" value="COMPLEMENT COMPONENT 1, S SUBCOMPONENT-RELATED"/>
    <property type="match status" value="1"/>
</dbReference>
<dbReference type="Pfam" id="PF00431">
    <property type="entry name" value="CUB"/>
    <property type="match status" value="2"/>
</dbReference>
<dbReference type="Pfam" id="PF14670">
    <property type="entry name" value="FXa_inhibition"/>
    <property type="match status" value="1"/>
</dbReference>
<dbReference type="Pfam" id="PF00084">
    <property type="entry name" value="Sushi"/>
    <property type="match status" value="2"/>
</dbReference>
<dbReference type="Pfam" id="PF00089">
    <property type="entry name" value="Trypsin"/>
    <property type="match status" value="1"/>
</dbReference>
<dbReference type="PIRSF" id="PIRSF001155">
    <property type="entry name" value="C1r_C1s_MASP"/>
    <property type="match status" value="1"/>
</dbReference>
<dbReference type="PRINTS" id="PR00722">
    <property type="entry name" value="CHYMOTRYPSIN"/>
</dbReference>
<dbReference type="SMART" id="SM00032">
    <property type="entry name" value="CCP"/>
    <property type="match status" value="2"/>
</dbReference>
<dbReference type="SMART" id="SM00042">
    <property type="entry name" value="CUB"/>
    <property type="match status" value="2"/>
</dbReference>
<dbReference type="SMART" id="SM00181">
    <property type="entry name" value="EGF"/>
    <property type="match status" value="1"/>
</dbReference>
<dbReference type="SMART" id="SM00179">
    <property type="entry name" value="EGF_CA"/>
    <property type="match status" value="1"/>
</dbReference>
<dbReference type="SMART" id="SM00020">
    <property type="entry name" value="Tryp_SPc"/>
    <property type="match status" value="1"/>
</dbReference>
<dbReference type="SUPFAM" id="SSF57535">
    <property type="entry name" value="Complement control module/SCR domain"/>
    <property type="match status" value="2"/>
</dbReference>
<dbReference type="SUPFAM" id="SSF57196">
    <property type="entry name" value="EGF/Laminin"/>
    <property type="match status" value="1"/>
</dbReference>
<dbReference type="SUPFAM" id="SSF49854">
    <property type="entry name" value="Spermadhesin, CUB domain"/>
    <property type="match status" value="2"/>
</dbReference>
<dbReference type="SUPFAM" id="SSF50494">
    <property type="entry name" value="Trypsin-like serine proteases"/>
    <property type="match status" value="1"/>
</dbReference>
<dbReference type="PROSITE" id="PS00010">
    <property type="entry name" value="ASX_HYDROXYL"/>
    <property type="match status" value="1"/>
</dbReference>
<dbReference type="PROSITE" id="PS01180">
    <property type="entry name" value="CUB"/>
    <property type="match status" value="2"/>
</dbReference>
<dbReference type="PROSITE" id="PS01186">
    <property type="entry name" value="EGF_2"/>
    <property type="match status" value="1"/>
</dbReference>
<dbReference type="PROSITE" id="PS01187">
    <property type="entry name" value="EGF_CA"/>
    <property type="match status" value="1"/>
</dbReference>
<dbReference type="PROSITE" id="PS50923">
    <property type="entry name" value="SUSHI"/>
    <property type="match status" value="2"/>
</dbReference>
<dbReference type="PROSITE" id="PS50240">
    <property type="entry name" value="TRYPSIN_DOM"/>
    <property type="match status" value="1"/>
</dbReference>
<dbReference type="PROSITE" id="PS00135">
    <property type="entry name" value="TRYPSIN_SER"/>
    <property type="match status" value="1"/>
</dbReference>
<accession>Q8CG16</accession>
<accession>Q99KI6</accession>
<accession>Q9ET60</accession>
<organism>
    <name type="scientific">Mus musculus</name>
    <name type="common">Mouse</name>
    <dbReference type="NCBI Taxonomy" id="10090"/>
    <lineage>
        <taxon>Eukaryota</taxon>
        <taxon>Metazoa</taxon>
        <taxon>Chordata</taxon>
        <taxon>Craniata</taxon>
        <taxon>Vertebrata</taxon>
        <taxon>Euteleostomi</taxon>
        <taxon>Mammalia</taxon>
        <taxon>Eutheria</taxon>
        <taxon>Euarchontoglires</taxon>
        <taxon>Glires</taxon>
        <taxon>Rodentia</taxon>
        <taxon>Myomorpha</taxon>
        <taxon>Muroidea</taxon>
        <taxon>Muridae</taxon>
        <taxon>Murinae</taxon>
        <taxon>Mus</taxon>
        <taxon>Mus</taxon>
    </lineage>
</organism>
<comment type="function">
    <text evidence="1">Serine protease component of the complement C1 complex, a multiprotein complex that initiates the classical pathway of the complement system, a cascade of proteins that leads to phagocytosis and breakdown of pathogens and signaling that strengthens the adaptive immune system. C1R catalyzes the first enzymatic step in the classical complement pathway: it is activated by the C1Q subcomplex of the C1 complex, which associates with IgG or IgM immunoglobulins complexed with antigens to form antigen-antibody complexes on the surface of pathogens. Immunoglobulin-binding promotes the autocatalytic cleavage and activation of C1R. Activated C1R then cleaves and activates C1S, the second protease of the classical complement pathway. It is unclear if C1R activates C1S within single, strained C1 complexes or between neighboring C1 complexes on surfaces.</text>
</comment>
<comment type="catalytic activity">
    <reaction evidence="1">
        <text>Selective cleavage of Lys(or Arg)-|-Ile bond in complement subcomponent C1s to form the active form of C1s (EC 3.4.21.42).</text>
        <dbReference type="EC" id="3.4.21.41"/>
    </reaction>
</comment>
<comment type="activity regulation">
    <text evidence="1">Activated by the C1Q subcomplex of the C1 complex following C1Q binding to immunoglobulins (IgG or IgM) complexed with antigens to form antigen-antibody complexes on the surface of pathogens. Immunoglobulin-binding promotes autoactivation of C1R, which results in the cleavage of the Arg-Ile bond in the catalytic domain.</text>
</comment>
<comment type="subunit">
    <text evidence="1">Core component of the complement C1 complex, a calcium-dependent complex composed of 1 molecule of the C1Q subcomplex, 2 molecules of C1R and 2 molecules of C1S. The C1Q subcomplex is composed 18 subunits: 3 chains of C1QA, C1QB, and C1QC trimerize to form 6 collagen-like triple helices connected to six globular ligand-recognition modules. Within the C1 complex, C1R is a dimer of identical chains, each of which is activated by cleavage into two chains, heavy and light, connected by disulfide bonds.</text>
</comment>
<comment type="subcellular location">
    <subcellularLocation>
        <location evidence="1">Secreted</location>
    </subcellularLocation>
    <subcellularLocation>
        <location evidence="1">Cell surface</location>
    </subcellularLocation>
    <text evidence="1">Recruited to the surface of pathogens by the C1Q subcomplex.</text>
</comment>
<comment type="domain">
    <text evidence="1">The CUB domain 2 shows a compact folded structure in the presence of Ca(2+), whereas it has a flexible, disordered conformation in the absence of Ca(2+). Ca(2+) could provide a switch between the folded and disordered forms; low Ca(2+) could provide flexibility to promote autoprocessing and activation of CIR.</text>
</comment>
<comment type="PTM">
    <text evidence="1">Cleaved and activated by autocatalytic processing to generate Complement C1r subcomponent heavy and light chains that are connected by disulfide bonds.</text>
</comment>
<comment type="PTM">
    <text evidence="1">The iron and 2-oxoglutarate dependent 3-hydroxylation of aspartate and asparagine is (R) stereospecific within EGF domains.</text>
</comment>
<comment type="similarity">
    <text evidence="4">Belongs to the peptidase S1 family.</text>
</comment>
<feature type="signal peptide" evidence="1">
    <location>
        <begin position="1"/>
        <end position="16"/>
    </location>
</feature>
<feature type="chain" id="PRO_0000027580" description="Complement C1r-A subcomponent">
    <location>
        <begin position="17"/>
        <end position="707"/>
    </location>
</feature>
<feature type="chain" id="PRO_0000027581" description="Complement C1r-A subcomponent heavy chain" evidence="1">
    <location>
        <begin position="17"/>
        <end position="462"/>
    </location>
</feature>
<feature type="chain" id="PRO_0000027582" description="Complement C1r-A subcomponent light chain" evidence="1">
    <location>
        <begin position="463"/>
        <end position="707"/>
    </location>
</feature>
<feature type="domain" description="CUB 1" evidence="3">
    <location>
        <begin position="17"/>
        <end position="140"/>
    </location>
</feature>
<feature type="domain" description="EGF-like; calcium-binding" evidence="2">
    <location>
        <begin position="141"/>
        <end position="189"/>
    </location>
</feature>
<feature type="domain" description="CUB 2" evidence="3">
    <location>
        <begin position="192"/>
        <end position="304"/>
    </location>
</feature>
<feature type="domain" description="Sushi 1" evidence="5">
    <location>
        <begin position="306"/>
        <end position="372"/>
    </location>
</feature>
<feature type="domain" description="Sushi 2" evidence="5">
    <location>
        <begin position="373"/>
        <end position="448"/>
    </location>
</feature>
<feature type="domain" description="Peptidase S1" evidence="4">
    <location>
        <begin position="463"/>
        <end position="704"/>
    </location>
</feature>
<feature type="active site" description="Charge relay system" evidence="1">
    <location>
        <position position="501"/>
    </location>
</feature>
<feature type="active site" description="Charge relay system" evidence="1">
    <location>
        <position position="559"/>
    </location>
</feature>
<feature type="active site" description="Charge relay system" evidence="1">
    <location>
        <position position="656"/>
    </location>
</feature>
<feature type="binding site" evidence="1">
    <location>
        <position position="65"/>
    </location>
    <ligand>
        <name>Ca(2+)</name>
        <dbReference type="ChEBI" id="CHEBI:29108"/>
        <label>1</label>
    </ligand>
</feature>
<feature type="binding site" evidence="1">
    <location>
        <position position="73"/>
    </location>
    <ligand>
        <name>Ca(2+)</name>
        <dbReference type="ChEBI" id="CHEBI:29108"/>
        <label>1</label>
    </ligand>
</feature>
<feature type="binding site" evidence="1">
    <location>
        <position position="118"/>
    </location>
    <ligand>
        <name>Ca(2+)</name>
        <dbReference type="ChEBI" id="CHEBI:29108"/>
        <label>1</label>
    </ligand>
</feature>
<feature type="binding site" evidence="1">
    <location>
        <position position="141"/>
    </location>
    <ligand>
        <name>Ca(2+)</name>
        <dbReference type="ChEBI" id="CHEBI:29108"/>
        <label>2</label>
    </ligand>
</feature>
<feature type="binding site" evidence="1">
    <location>
        <position position="142"/>
    </location>
    <ligand>
        <name>Ca(2+)</name>
        <dbReference type="ChEBI" id="CHEBI:29108"/>
        <label>2</label>
    </ligand>
</feature>
<feature type="binding site" evidence="1">
    <location>
        <position position="144"/>
    </location>
    <ligand>
        <name>Ca(2+)</name>
        <dbReference type="ChEBI" id="CHEBI:29108"/>
        <label>2</label>
    </ligand>
</feature>
<feature type="binding site" evidence="1">
    <location>
        <position position="166"/>
    </location>
    <ligand>
        <name>Ca(2+)</name>
        <dbReference type="ChEBI" id="CHEBI:29108"/>
        <label>2</label>
    </ligand>
</feature>
<feature type="binding site" evidence="1">
    <location>
        <position position="167"/>
    </location>
    <ligand>
        <name>Ca(2+)</name>
        <dbReference type="ChEBI" id="CHEBI:29108"/>
        <label>2</label>
    </ligand>
</feature>
<feature type="binding site" evidence="1">
    <location>
        <position position="170"/>
    </location>
    <ligand>
        <name>Ca(2+)</name>
        <dbReference type="ChEBI" id="CHEBI:29108"/>
        <label>2</label>
    </ligand>
</feature>
<feature type="binding site" evidence="1">
    <location>
        <position position="242"/>
    </location>
    <ligand>
        <name>Ca(2+)</name>
        <dbReference type="ChEBI" id="CHEBI:29108"/>
        <label>3</label>
    </ligand>
</feature>
<feature type="binding site" evidence="1">
    <location>
        <position position="252"/>
    </location>
    <ligand>
        <name>Ca(2+)</name>
        <dbReference type="ChEBI" id="CHEBI:29108"/>
        <label>3</label>
    </ligand>
</feature>
<feature type="binding site" evidence="1">
    <location>
        <position position="289"/>
    </location>
    <ligand>
        <name>Ca(2+)</name>
        <dbReference type="ChEBI" id="CHEBI:29108"/>
        <label>3</label>
    </ligand>
</feature>
<feature type="binding site" evidence="1">
    <location>
        <position position="293"/>
    </location>
    <ligand>
        <name>Ca(2+)</name>
        <dbReference type="ChEBI" id="CHEBI:29108"/>
        <label>3</label>
    </ligand>
</feature>
<feature type="site" description="Cleavage; by autolysis" evidence="1">
    <location>
        <begin position="462"/>
        <end position="463"/>
    </location>
</feature>
<feature type="modified residue" description="(3R)-3-hydroxyasparagine" evidence="1">
    <location>
        <position position="166"/>
    </location>
</feature>
<feature type="modified residue" description="Phosphoserine; by CK2" evidence="1">
    <location>
        <position position="205"/>
    </location>
</feature>
<feature type="glycosylation site" description="N-linked (GlcNAc...) asparagine" evidence="2">
    <location>
        <position position="124"/>
    </location>
</feature>
<feature type="glycosylation site" description="N-linked (GlcNAc...) asparagine" evidence="6">
    <location>
        <position position="220"/>
    </location>
</feature>
<feature type="glycosylation site" description="N-linked (GlcNAc...) asparagine" evidence="2">
    <location>
        <position position="583"/>
    </location>
</feature>
<feature type="disulfide bond" evidence="1">
    <location>
        <begin position="70"/>
        <end position="88"/>
    </location>
</feature>
<feature type="disulfide bond" evidence="1">
    <location>
        <begin position="145"/>
        <end position="164"/>
    </location>
</feature>
<feature type="disulfide bond" evidence="1">
    <location>
        <begin position="160"/>
        <end position="173"/>
    </location>
</feature>
<feature type="disulfide bond" evidence="1">
    <location>
        <begin position="175"/>
        <end position="188"/>
    </location>
</feature>
<feature type="disulfide bond" evidence="1">
    <location>
        <begin position="192"/>
        <end position="219"/>
    </location>
</feature>
<feature type="disulfide bond" evidence="1">
    <location>
        <begin position="249"/>
        <end position="267"/>
    </location>
</feature>
<feature type="disulfide bond" evidence="1">
    <location>
        <begin position="308"/>
        <end position="357"/>
    </location>
</feature>
<feature type="disulfide bond" evidence="1">
    <location>
        <begin position="337"/>
        <end position="370"/>
    </location>
</feature>
<feature type="disulfide bond" evidence="1">
    <location>
        <begin position="375"/>
        <end position="428"/>
    </location>
</feature>
<feature type="disulfide bond" evidence="1">
    <location>
        <begin position="405"/>
        <end position="446"/>
    </location>
</feature>
<feature type="disulfide bond" description="Interchain (between heavy and light chains)" evidence="3 4 5">
    <location>
        <begin position="450"/>
        <end position="579"/>
    </location>
</feature>
<feature type="disulfide bond" evidence="1">
    <location>
        <begin position="622"/>
        <end position="641"/>
    </location>
</feature>
<feature type="disulfide bond" evidence="1">
    <location>
        <begin position="652"/>
        <end position="682"/>
    </location>
</feature>
<feature type="sequence conflict" description="In Ref. 1; AAG01898." evidence="7" ref="1">
    <original>S</original>
    <variation>R</variation>
    <location>
        <position position="101"/>
    </location>
</feature>
<feature type="sequence conflict" description="In Ref. 3; AAH04637." evidence="7" ref="3">
    <original>N</original>
    <variation>H</variation>
    <location>
        <position position="359"/>
    </location>
</feature>
<keyword id="KW-0068">Autocatalytic cleavage</keyword>
<keyword id="KW-0106">Calcium</keyword>
<keyword id="KW-0180">Complement pathway</keyword>
<keyword id="KW-1015">Disulfide bond</keyword>
<keyword id="KW-0245">EGF-like domain</keyword>
<keyword id="KW-0325">Glycoprotein</keyword>
<keyword id="KW-0378">Hydrolase</keyword>
<keyword id="KW-0379">Hydroxylation</keyword>
<keyword id="KW-0391">Immunity</keyword>
<keyword id="KW-0399">Innate immunity</keyword>
<keyword id="KW-0479">Metal-binding</keyword>
<keyword id="KW-0597">Phosphoprotein</keyword>
<keyword id="KW-0645">Protease</keyword>
<keyword id="KW-1185">Reference proteome</keyword>
<keyword id="KW-0677">Repeat</keyword>
<keyword id="KW-0964">Secreted</keyword>
<keyword id="KW-0720">Serine protease</keyword>
<keyword id="KW-0732">Signal</keyword>
<keyword id="KW-0768">Sushi</keyword>
<protein>
    <recommendedName>
        <fullName>Complement C1r-A subcomponent</fullName>
        <ecNumber evidence="1">3.4.21.41</ecNumber>
    </recommendedName>
    <alternativeName>
        <fullName>Complement component 1 subcomponent r-A</fullName>
    </alternativeName>
    <component>
        <recommendedName>
            <fullName>Complement C1r-A subcomponent heavy chain</fullName>
        </recommendedName>
    </component>
    <component>
        <recommendedName>
            <fullName>Complement C1r-A subcomponent light chain</fullName>
        </recommendedName>
    </component>
</protein>
<proteinExistence type="evidence at protein level"/>
<evidence type="ECO:0000250" key="1">
    <source>
        <dbReference type="UniProtKB" id="P00736"/>
    </source>
</evidence>
<evidence type="ECO:0000255" key="2"/>
<evidence type="ECO:0000255" key="3">
    <source>
        <dbReference type="PROSITE-ProRule" id="PRU00059"/>
    </source>
</evidence>
<evidence type="ECO:0000255" key="4">
    <source>
        <dbReference type="PROSITE-ProRule" id="PRU00274"/>
    </source>
</evidence>
<evidence type="ECO:0000255" key="5">
    <source>
        <dbReference type="PROSITE-ProRule" id="PRU00302"/>
    </source>
</evidence>
<evidence type="ECO:0000269" key="6">
    <source>
    </source>
</evidence>
<evidence type="ECO:0000305" key="7"/>
<gene>
    <name type="primary">C1ra</name>
    <name type="synonym">C1r</name>
</gene>
<sequence>MWLFALLVTLFYGVEGSIYLPQKLYGEVTSPLYPKPYPSDLETTTVITVPMGYRVKLVFWQFDVEPSEGCFYDYVKISADKQTLGRFCGQLDSPLGNPPGSKEFMSQGNKMLLTFHTDFSNEENGTIMFYKGFLAYYQAVDLDECASQPNSVEEGLQPRCQHLCHNYVGGYFCSCHPGYELQKDGQSCQAECSSELYTEPSGYVSSLEYPQPYPPDLRCNYSIRVERGLTVHLKFLDPFEIDDHQQVHCPYDQLQIYANGKNLGEFCGKQRPPDLDTSSNAVDLLFFTDESGDSRGWKLHYTTETIKCPQPKALDEFTIIQDPQPQYQFRDYFIVTCKQGYQLMEGNQALLSFTAVCQNDGTWHRAMPRCKIKNCGQPQSLSNGDFRYITTKGVTTYEASIQYHCHEPYYKMLTRAGSSESMRGIYTCTAQGIWKNEEEGEKMPRCLPVCGKPVNPVTQKERIIRGQPARPGNFPWQAFTTTHGRGGGALLGDRWILTAAHTIYPKHHNKENDNANPKMLVFLGHTNVEQIKKLGHHPVRRVIIHPDYRQDEPNNFEGDIALLELENSVTLGPELLPICLPDNETFYGQGLMGYVSGFGITEDKLAFDLRFVRLPVADSEACQRWLQTKKDTSPFSQNMFCSGDPAVQQDACQGDSGGVFAVRDRNRDIWVATGIVSWGIGCGEGYGFYTKVLNYVDWIKKEMGDEN</sequence>
<name>C1RA_MOUSE</name>